<proteinExistence type="evidence at transcript level"/>
<feature type="chain" id="PRO_0000274240" description="Protein FAM222A">
    <location>
        <begin position="1"/>
        <end position="453"/>
    </location>
</feature>
<comment type="similarity">
    <text evidence="1">Belongs to the FAM222 family.</text>
</comment>
<accession>Q6PGH4</accession>
<evidence type="ECO:0000305" key="1"/>
<keyword id="KW-1185">Reference proteome</keyword>
<protein>
    <recommendedName>
        <fullName>Protein FAM222A</fullName>
    </recommendedName>
</protein>
<dbReference type="EMBL" id="BC057022">
    <property type="protein sequence ID" value="AAH57022.1"/>
    <property type="molecule type" value="mRNA"/>
</dbReference>
<dbReference type="CCDS" id="CCDS19567.1"/>
<dbReference type="RefSeq" id="NP_001004180.1">
    <property type="nucleotide sequence ID" value="NM_001004180.1"/>
</dbReference>
<dbReference type="RefSeq" id="XP_006530464.1">
    <property type="nucleotide sequence ID" value="XM_006530401.5"/>
</dbReference>
<dbReference type="FunCoup" id="Q6PGH4">
    <property type="interactions" value="19"/>
</dbReference>
<dbReference type="STRING" id="10090.ENSMUSP00000045724"/>
<dbReference type="GlyGen" id="Q6PGH4">
    <property type="glycosylation" value="1 site"/>
</dbReference>
<dbReference type="PhosphoSitePlus" id="Q6PGH4"/>
<dbReference type="PaxDb" id="10090-ENSMUSP00000045724"/>
<dbReference type="ProteomicsDB" id="275730"/>
<dbReference type="Antibodypedia" id="48247">
    <property type="antibodies" value="34 antibodies from 11 providers"/>
</dbReference>
<dbReference type="DNASU" id="433940"/>
<dbReference type="Ensembl" id="ENSMUST00000043650.8">
    <property type="protein sequence ID" value="ENSMUSP00000045724.8"/>
    <property type="gene ID" value="ENSMUSG00000041930.8"/>
</dbReference>
<dbReference type="GeneID" id="433940"/>
<dbReference type="KEGG" id="mmu:433940"/>
<dbReference type="UCSC" id="uc008yzt.1">
    <property type="organism name" value="mouse"/>
</dbReference>
<dbReference type="AGR" id="MGI:3605543"/>
<dbReference type="CTD" id="84915"/>
<dbReference type="MGI" id="MGI:3605543">
    <property type="gene designation" value="Fam222a"/>
</dbReference>
<dbReference type="VEuPathDB" id="HostDB:ENSMUSG00000041930"/>
<dbReference type="eggNOG" id="ENOG502QPV4">
    <property type="taxonomic scope" value="Eukaryota"/>
</dbReference>
<dbReference type="GeneTree" id="ENSGT00530000063811"/>
<dbReference type="HOGENOM" id="CLU_027495_1_0_1"/>
<dbReference type="InParanoid" id="Q6PGH4"/>
<dbReference type="OMA" id="QQHLRMY"/>
<dbReference type="OrthoDB" id="8932586at2759"/>
<dbReference type="PhylomeDB" id="Q6PGH4"/>
<dbReference type="TreeFam" id="TF331508"/>
<dbReference type="BioGRID-ORCS" id="433940">
    <property type="hits" value="0 hits in 77 CRISPR screens"/>
</dbReference>
<dbReference type="ChiTaRS" id="Fam222a">
    <property type="organism name" value="mouse"/>
</dbReference>
<dbReference type="PRO" id="PR:Q6PGH4"/>
<dbReference type="Proteomes" id="UP000000589">
    <property type="component" value="Chromosome 5"/>
</dbReference>
<dbReference type="RNAct" id="Q6PGH4">
    <property type="molecule type" value="protein"/>
</dbReference>
<dbReference type="Bgee" id="ENSMUSG00000041930">
    <property type="expression patterns" value="Expressed in adrenal gland and 56 other cell types or tissues"/>
</dbReference>
<dbReference type="InterPro" id="IPR029340">
    <property type="entry name" value="FAM222"/>
</dbReference>
<dbReference type="PANTHER" id="PTHR16070:SF2">
    <property type="entry name" value="PROTEIN FAM222A"/>
    <property type="match status" value="1"/>
</dbReference>
<dbReference type="PANTHER" id="PTHR16070">
    <property type="entry name" value="PROTEIN FAM222A-RELATED"/>
    <property type="match status" value="1"/>
</dbReference>
<dbReference type="Pfam" id="PF15258">
    <property type="entry name" value="FAM222A"/>
    <property type="match status" value="2"/>
</dbReference>
<organism>
    <name type="scientific">Mus musculus</name>
    <name type="common">Mouse</name>
    <dbReference type="NCBI Taxonomy" id="10090"/>
    <lineage>
        <taxon>Eukaryota</taxon>
        <taxon>Metazoa</taxon>
        <taxon>Chordata</taxon>
        <taxon>Craniata</taxon>
        <taxon>Vertebrata</taxon>
        <taxon>Euteleostomi</taxon>
        <taxon>Mammalia</taxon>
        <taxon>Eutheria</taxon>
        <taxon>Euarchontoglires</taxon>
        <taxon>Glires</taxon>
        <taxon>Rodentia</taxon>
        <taxon>Myomorpha</taxon>
        <taxon>Muroidea</taxon>
        <taxon>Muridae</taxon>
        <taxon>Murinae</taxon>
        <taxon>Mus</taxon>
        <taxon>Mus</taxon>
    </lineage>
</organism>
<reference key="1">
    <citation type="journal article" date="2004" name="Genome Res.">
        <title>The status, quality, and expansion of the NIH full-length cDNA project: the Mammalian Gene Collection (MGC).</title>
        <authorList>
            <consortium name="The MGC Project Team"/>
        </authorList>
    </citation>
    <scope>NUCLEOTIDE SEQUENCE [LARGE SCALE MRNA]</scope>
    <source>
        <strain>C57BL/6J</strain>
        <tissue>Brain</tissue>
    </source>
</reference>
<name>F222A_MOUSE</name>
<sequence length="453" mass="47233">MLACLQRTQNPPGQHLACPSKSLDLRKCESVASSMHSSRYPSPAELDAYAEKVANSPLSIKIFPTNIRVPQHKHLSRTVNGYDTSGQRYSPYPQHTAGYQGLLAIVKAAVSSSAHAPAGHPKSVLKSVEGKRTKLSPATVQVGIAPYPVPSTLGPLAYPKPPEAPAPPPSLPAAATATSVIPLPGRGLPLPPSNLPSIHSILYQLNQQCQAPGAAPSACQGVAVPHPSPAKHGPVPSFPNLAYSATAGLPDCRKGTELSQGATPALTLAGATKPAGYAEGGLDYLLWPQKPPPPPPQPLRAYSSSTVAGKSQSPEICGGRAFERANGSPHNCGMGLPGSFTVGQYFAAPWNSVLVTPTSDCYNPAAAAVVTELAPGAARELAGPPGDVLSGLTSKSVCNTAVLSSSLQSLEYLINDIRPPCIKEQMLGKGYETVAVPRLLDHQHAHIRLPVYR</sequence>
<gene>
    <name type="primary">Fam222a</name>
</gene>